<accession>B4TWV8</accession>
<organism>
    <name type="scientific">Salmonella schwarzengrund (strain CVM19633)</name>
    <dbReference type="NCBI Taxonomy" id="439843"/>
    <lineage>
        <taxon>Bacteria</taxon>
        <taxon>Pseudomonadati</taxon>
        <taxon>Pseudomonadota</taxon>
        <taxon>Gammaproteobacteria</taxon>
        <taxon>Enterobacterales</taxon>
        <taxon>Enterobacteriaceae</taxon>
        <taxon>Salmonella</taxon>
    </lineage>
</organism>
<evidence type="ECO:0000255" key="1">
    <source>
        <dbReference type="HAMAP-Rule" id="MF_01031"/>
    </source>
</evidence>
<name>LEUD_SALSV</name>
<feature type="chain" id="PRO_1000135832" description="3-isopropylmalate dehydratase small subunit">
    <location>
        <begin position="1"/>
        <end position="201"/>
    </location>
</feature>
<keyword id="KW-0028">Amino-acid biosynthesis</keyword>
<keyword id="KW-0100">Branched-chain amino acid biosynthesis</keyword>
<keyword id="KW-0432">Leucine biosynthesis</keyword>
<keyword id="KW-0456">Lyase</keyword>
<reference key="1">
    <citation type="journal article" date="2011" name="J. Bacteriol.">
        <title>Comparative genomics of 28 Salmonella enterica isolates: evidence for CRISPR-mediated adaptive sublineage evolution.</title>
        <authorList>
            <person name="Fricke W.F."/>
            <person name="Mammel M.K."/>
            <person name="McDermott P.F."/>
            <person name="Tartera C."/>
            <person name="White D.G."/>
            <person name="Leclerc J.E."/>
            <person name="Ravel J."/>
            <person name="Cebula T.A."/>
        </authorList>
    </citation>
    <scope>NUCLEOTIDE SEQUENCE [LARGE SCALE GENOMIC DNA]</scope>
    <source>
        <strain>CVM19633</strain>
    </source>
</reference>
<gene>
    <name evidence="1" type="primary">leuD</name>
    <name type="ordered locus">SeSA_A0126</name>
</gene>
<proteinExistence type="inferred from homology"/>
<sequence>MAEKFTQHTGLVVPLDAANIDTDAIIPKQFLQKVTRTGFGAHLFNDWRFLDEKGQQPNPEFVLNFPEYQGASILLARENFGCGSSREHAPWALTDYGFKVVIAPSFADIFYGNSFNNQLLPVTLSDAQVDELFALVKANPGIKFEVDLEAQVVKAGDKTYSFKIDDFRRHCMLNGLDSIGLTLQHEDAIAAYENKQPAFMR</sequence>
<dbReference type="EC" id="4.2.1.33" evidence="1"/>
<dbReference type="EMBL" id="CP001127">
    <property type="protein sequence ID" value="ACF92071.1"/>
    <property type="molecule type" value="Genomic_DNA"/>
</dbReference>
<dbReference type="RefSeq" id="WP_000818258.1">
    <property type="nucleotide sequence ID" value="NC_011094.1"/>
</dbReference>
<dbReference type="SMR" id="B4TWV8"/>
<dbReference type="KEGG" id="sew:SeSA_A0126"/>
<dbReference type="HOGENOM" id="CLU_081378_0_3_6"/>
<dbReference type="UniPathway" id="UPA00048">
    <property type="reaction ID" value="UER00071"/>
</dbReference>
<dbReference type="Proteomes" id="UP000001865">
    <property type="component" value="Chromosome"/>
</dbReference>
<dbReference type="GO" id="GO:0009316">
    <property type="term" value="C:3-isopropylmalate dehydratase complex"/>
    <property type="evidence" value="ECO:0007669"/>
    <property type="project" value="InterPro"/>
</dbReference>
<dbReference type="GO" id="GO:0003861">
    <property type="term" value="F:3-isopropylmalate dehydratase activity"/>
    <property type="evidence" value="ECO:0007669"/>
    <property type="project" value="UniProtKB-UniRule"/>
</dbReference>
<dbReference type="GO" id="GO:0009098">
    <property type="term" value="P:L-leucine biosynthetic process"/>
    <property type="evidence" value="ECO:0007669"/>
    <property type="project" value="UniProtKB-UniRule"/>
</dbReference>
<dbReference type="CDD" id="cd01577">
    <property type="entry name" value="IPMI_Swivel"/>
    <property type="match status" value="1"/>
</dbReference>
<dbReference type="FunFam" id="3.20.19.10:FF:000003">
    <property type="entry name" value="3-isopropylmalate dehydratase small subunit"/>
    <property type="match status" value="1"/>
</dbReference>
<dbReference type="Gene3D" id="3.20.19.10">
    <property type="entry name" value="Aconitase, domain 4"/>
    <property type="match status" value="1"/>
</dbReference>
<dbReference type="HAMAP" id="MF_01031">
    <property type="entry name" value="LeuD_type1"/>
    <property type="match status" value="1"/>
</dbReference>
<dbReference type="InterPro" id="IPR004431">
    <property type="entry name" value="3-IsopropMal_deHydase_ssu"/>
</dbReference>
<dbReference type="InterPro" id="IPR015928">
    <property type="entry name" value="Aconitase/3IPM_dehydase_swvl"/>
</dbReference>
<dbReference type="InterPro" id="IPR000573">
    <property type="entry name" value="AconitaseA/IPMdHydase_ssu_swvl"/>
</dbReference>
<dbReference type="InterPro" id="IPR033940">
    <property type="entry name" value="IPMI_Swivel"/>
</dbReference>
<dbReference type="InterPro" id="IPR050075">
    <property type="entry name" value="LeuD"/>
</dbReference>
<dbReference type="NCBIfam" id="TIGR00171">
    <property type="entry name" value="leuD"/>
    <property type="match status" value="1"/>
</dbReference>
<dbReference type="NCBIfam" id="NF002458">
    <property type="entry name" value="PRK01641.1"/>
    <property type="match status" value="1"/>
</dbReference>
<dbReference type="PANTHER" id="PTHR43345:SF5">
    <property type="entry name" value="3-ISOPROPYLMALATE DEHYDRATASE SMALL SUBUNIT"/>
    <property type="match status" value="1"/>
</dbReference>
<dbReference type="PANTHER" id="PTHR43345">
    <property type="entry name" value="3-ISOPROPYLMALATE DEHYDRATASE SMALL SUBUNIT 2-RELATED-RELATED"/>
    <property type="match status" value="1"/>
</dbReference>
<dbReference type="Pfam" id="PF00694">
    <property type="entry name" value="Aconitase_C"/>
    <property type="match status" value="1"/>
</dbReference>
<dbReference type="SUPFAM" id="SSF52016">
    <property type="entry name" value="LeuD/IlvD-like"/>
    <property type="match status" value="1"/>
</dbReference>
<comment type="function">
    <text evidence="1">Catalyzes the isomerization between 2-isopropylmalate and 3-isopropylmalate, via the formation of 2-isopropylmaleate.</text>
</comment>
<comment type="catalytic activity">
    <reaction evidence="1">
        <text>(2R,3S)-3-isopropylmalate = (2S)-2-isopropylmalate</text>
        <dbReference type="Rhea" id="RHEA:32287"/>
        <dbReference type="ChEBI" id="CHEBI:1178"/>
        <dbReference type="ChEBI" id="CHEBI:35121"/>
        <dbReference type="EC" id="4.2.1.33"/>
    </reaction>
</comment>
<comment type="pathway">
    <text evidence="1">Amino-acid biosynthesis; L-leucine biosynthesis; L-leucine from 3-methyl-2-oxobutanoate: step 2/4.</text>
</comment>
<comment type="subunit">
    <text evidence="1">Heterodimer of LeuC and LeuD.</text>
</comment>
<comment type="similarity">
    <text evidence="1">Belongs to the LeuD family. LeuD type 1 subfamily.</text>
</comment>
<protein>
    <recommendedName>
        <fullName evidence="1">3-isopropylmalate dehydratase small subunit</fullName>
        <ecNumber evidence="1">4.2.1.33</ecNumber>
    </recommendedName>
    <alternativeName>
        <fullName evidence="1">Alpha-IPM isomerase</fullName>
        <shortName evidence="1">IPMI</shortName>
    </alternativeName>
    <alternativeName>
        <fullName evidence="1">Isopropylmalate isomerase</fullName>
    </alternativeName>
</protein>